<comment type="function">
    <text evidence="2 4">Involved in some intermediate steps for the synthesis of the antibiotic polyketide bacillaene which is involved in secondary metabolism. It catalyzes the aldol condensation between the acetyl group attached to the acyl-carrier-protein AcpK (Ac-AcpK) and a beta-ketothioester polyketide intermediate linked to one of the consecutive thiolation domains of PksL.</text>
</comment>
<comment type="catalytic activity">
    <reaction evidence="2">
        <text>3-oxobutanoyl-[ACP] + acetyl-[ACP] + H2O = (3S)-hydroxy-3-methylglutaryl-[ACP] + holo-[ACP] + H(+)</text>
        <dbReference type="Rhea" id="RHEA:52936"/>
        <dbReference type="Rhea" id="RHEA-COMP:9621"/>
        <dbReference type="Rhea" id="RHEA-COMP:9625"/>
        <dbReference type="Rhea" id="RHEA-COMP:9685"/>
        <dbReference type="Rhea" id="RHEA-COMP:13408"/>
        <dbReference type="ChEBI" id="CHEBI:15377"/>
        <dbReference type="ChEBI" id="CHEBI:15378"/>
        <dbReference type="ChEBI" id="CHEBI:64479"/>
        <dbReference type="ChEBI" id="CHEBI:78446"/>
        <dbReference type="ChEBI" id="CHEBI:78450"/>
        <dbReference type="ChEBI" id="CHEBI:136897"/>
    </reaction>
</comment>
<comment type="pathway">
    <text>Antibiotic biosynthesis; bacillaene biosynthesis.</text>
</comment>
<comment type="subcellular location">
    <subcellularLocation>
        <location evidence="3">Cytoplasm</location>
    </subcellularLocation>
</comment>
<comment type="similarity">
    <text evidence="5">Belongs to the thiolase-like superfamily. HMG-CoA synthase family.</text>
</comment>
<comment type="sequence caution" evidence="5">
    <conflict type="erroneous initiation">
        <sequence resource="EMBL-CDS" id="AAA85140"/>
    </conflict>
</comment>
<accession>P40830</accession>
<keyword id="KW-0002">3D-structure</keyword>
<keyword id="KW-0045">Antibiotic biosynthesis</keyword>
<keyword id="KW-0963">Cytoplasm</keyword>
<keyword id="KW-1185">Reference proteome</keyword>
<keyword id="KW-0808">Transferase</keyword>
<proteinExistence type="evidence at protein level"/>
<evidence type="ECO:0000250" key="1"/>
<evidence type="ECO:0000269" key="2">
    <source>
    </source>
</evidence>
<evidence type="ECO:0000269" key="3">
    <source>
    </source>
</evidence>
<evidence type="ECO:0000269" key="4">
    <source>
    </source>
</evidence>
<evidence type="ECO:0000305" key="5"/>
<evidence type="ECO:0007829" key="6">
    <source>
        <dbReference type="PDB" id="4YXQ"/>
    </source>
</evidence>
<evidence type="ECO:0007829" key="7">
    <source>
        <dbReference type="PDB" id="4YXT"/>
    </source>
</evidence>
<feature type="chain" id="PRO_0000213759" description="Polyketide biosynthesis 3-hydroxy-3-methylglutaryl-ACP synthase PksG">
    <location>
        <begin position="1"/>
        <end position="420"/>
    </location>
</feature>
<feature type="active site" description="Proton donor/acceptor" evidence="1">
    <location>
        <position position="82"/>
    </location>
</feature>
<feature type="active site" description="Acyl-thioester intermediate" evidence="1">
    <location>
        <position position="114"/>
    </location>
</feature>
<feature type="active site" description="Proton donor/acceptor" evidence="1">
    <location>
        <position position="250"/>
    </location>
</feature>
<feature type="strand" evidence="7">
    <location>
        <begin position="5"/>
        <end position="12"/>
    </location>
</feature>
<feature type="strand" evidence="7">
    <location>
        <begin position="15"/>
        <end position="19"/>
    </location>
</feature>
<feature type="helix" evidence="7">
    <location>
        <begin position="20"/>
        <end position="27"/>
    </location>
</feature>
<feature type="helix" evidence="7">
    <location>
        <begin position="31"/>
        <end position="37"/>
    </location>
</feature>
<feature type="strand" evidence="7">
    <location>
        <begin position="41"/>
        <end position="43"/>
    </location>
</feature>
<feature type="helix" evidence="7">
    <location>
        <begin position="51"/>
        <end position="64"/>
    </location>
</feature>
<feature type="helix" evidence="7">
    <location>
        <begin position="68"/>
        <end position="72"/>
    </location>
</feature>
<feature type="strand" evidence="7">
    <location>
        <begin position="74"/>
        <end position="80"/>
    </location>
</feature>
<feature type="strand" evidence="7">
    <location>
        <begin position="87"/>
        <end position="89"/>
    </location>
</feature>
<feature type="helix" evidence="7">
    <location>
        <begin position="91"/>
        <end position="99"/>
    </location>
</feature>
<feature type="strand" evidence="7">
    <location>
        <begin position="103"/>
        <end position="112"/>
    </location>
</feature>
<feature type="helix" evidence="7">
    <location>
        <begin position="113"/>
        <end position="115"/>
    </location>
</feature>
<feature type="helix" evidence="7">
    <location>
        <begin position="116"/>
        <end position="130"/>
    </location>
</feature>
<feature type="strand" evidence="7">
    <location>
        <begin position="137"/>
        <end position="145"/>
    </location>
</feature>
<feature type="helix" evidence="7">
    <location>
        <begin position="161"/>
        <end position="164"/>
    </location>
</feature>
<feature type="helix" evidence="7">
    <location>
        <begin position="165"/>
        <end position="167"/>
    </location>
</feature>
<feature type="strand" evidence="7">
    <location>
        <begin position="170"/>
        <end position="179"/>
    </location>
</feature>
<feature type="strand" evidence="7">
    <location>
        <begin position="182"/>
        <end position="195"/>
    </location>
</feature>
<feature type="strand" evidence="7">
    <location>
        <begin position="200"/>
        <end position="205"/>
    </location>
</feature>
<feature type="strand" evidence="7">
    <location>
        <begin position="208"/>
        <end position="211"/>
    </location>
</feature>
<feature type="helix" evidence="7">
    <location>
        <begin position="213"/>
        <end position="234"/>
    </location>
</feature>
<feature type="turn" evidence="7">
    <location>
        <begin position="240"/>
        <end position="242"/>
    </location>
</feature>
<feature type="strand" evidence="7">
    <location>
        <begin position="245"/>
        <end position="249"/>
    </location>
</feature>
<feature type="helix" evidence="7">
    <location>
        <begin position="254"/>
        <end position="267"/>
    </location>
</feature>
<feature type="helix" evidence="7">
    <location>
        <begin position="273"/>
        <end position="283"/>
    </location>
</feature>
<feature type="helix" evidence="7">
    <location>
        <begin position="285"/>
        <end position="288"/>
    </location>
</feature>
<feature type="helix" evidence="7">
    <location>
        <begin position="291"/>
        <end position="294"/>
    </location>
</feature>
<feature type="helix" evidence="7">
    <location>
        <begin position="298"/>
        <end position="300"/>
    </location>
</feature>
<feature type="helix" evidence="7">
    <location>
        <begin position="301"/>
        <end position="312"/>
    </location>
</feature>
<feature type="strand" evidence="7">
    <location>
        <begin position="319"/>
        <end position="327"/>
    </location>
</feature>
<feature type="turn" evidence="7">
    <location>
        <begin position="328"/>
        <end position="330"/>
    </location>
</feature>
<feature type="strand" evidence="7">
    <location>
        <begin position="331"/>
        <end position="339"/>
    </location>
</feature>
<feature type="helix" evidence="7">
    <location>
        <begin position="341"/>
        <end position="349"/>
    </location>
</feature>
<feature type="helix" evidence="7">
    <location>
        <begin position="352"/>
        <end position="357"/>
    </location>
</feature>
<feature type="strand" evidence="7">
    <location>
        <begin position="359"/>
        <end position="361"/>
    </location>
</feature>
<feature type="helix" evidence="7">
    <location>
        <begin position="364"/>
        <end position="370"/>
    </location>
</feature>
<feature type="helix" evidence="6">
    <location>
        <begin position="374"/>
        <end position="376"/>
    </location>
</feature>
<feature type="helix" evidence="7">
    <location>
        <begin position="393"/>
        <end position="397"/>
    </location>
</feature>
<feature type="strand" evidence="7">
    <location>
        <begin position="403"/>
        <end position="410"/>
    </location>
</feature>
<feature type="strand" evidence="7">
    <location>
        <begin position="413"/>
        <end position="419"/>
    </location>
</feature>
<dbReference type="EC" id="2.3.3.-"/>
<dbReference type="EMBL" id="U11039">
    <property type="protein sequence ID" value="AAA85140.1"/>
    <property type="status" value="ALT_INIT"/>
    <property type="molecule type" value="Genomic_DNA"/>
</dbReference>
<dbReference type="EMBL" id="AL009126">
    <property type="protein sequence ID" value="CAB13586.2"/>
    <property type="molecule type" value="Genomic_DNA"/>
</dbReference>
<dbReference type="PIR" id="E69678">
    <property type="entry name" value="E69678"/>
</dbReference>
<dbReference type="RefSeq" id="NP_389595.2">
    <property type="nucleotide sequence ID" value="NC_000964.3"/>
</dbReference>
<dbReference type="RefSeq" id="WP_003231805.1">
    <property type="nucleotide sequence ID" value="NZ_OZ025638.1"/>
</dbReference>
<dbReference type="PDB" id="4YXQ">
    <property type="method" value="X-ray"/>
    <property type="resolution" value="2.47 A"/>
    <property type="chains" value="A/B/C/D=1-420"/>
</dbReference>
<dbReference type="PDB" id="4YXT">
    <property type="method" value="X-ray"/>
    <property type="resolution" value="2.10 A"/>
    <property type="chains" value="A/B=1-420"/>
</dbReference>
<dbReference type="PDB" id="4YXV">
    <property type="method" value="X-ray"/>
    <property type="resolution" value="2.75 A"/>
    <property type="chains" value="A/B=1-420"/>
</dbReference>
<dbReference type="PDBsum" id="4YXQ"/>
<dbReference type="PDBsum" id="4YXT"/>
<dbReference type="PDBsum" id="4YXV"/>
<dbReference type="SMR" id="P40830"/>
<dbReference type="FunCoup" id="P40830">
    <property type="interactions" value="272"/>
</dbReference>
<dbReference type="STRING" id="224308.BSU17150"/>
<dbReference type="SwissLipids" id="SLP:000001711"/>
<dbReference type="PaxDb" id="224308-BSU17150"/>
<dbReference type="DNASU" id="940121"/>
<dbReference type="EnsemblBacteria" id="CAB13586">
    <property type="protein sequence ID" value="CAB13586"/>
    <property type="gene ID" value="BSU_17150"/>
</dbReference>
<dbReference type="GeneID" id="940121"/>
<dbReference type="KEGG" id="bsu:BSU17150"/>
<dbReference type="PATRIC" id="fig|224308.179.peg.1860"/>
<dbReference type="eggNOG" id="COG3425">
    <property type="taxonomic scope" value="Bacteria"/>
</dbReference>
<dbReference type="InParanoid" id="P40830"/>
<dbReference type="OrthoDB" id="9769523at2"/>
<dbReference type="PhylomeDB" id="P40830"/>
<dbReference type="BioCyc" id="BSUB:BSU17150-MONOMER"/>
<dbReference type="UniPathway" id="UPA01003"/>
<dbReference type="Proteomes" id="UP000001570">
    <property type="component" value="Chromosome"/>
</dbReference>
<dbReference type="GO" id="GO:0005737">
    <property type="term" value="C:cytoplasm"/>
    <property type="evidence" value="ECO:0007669"/>
    <property type="project" value="UniProtKB-SubCell"/>
</dbReference>
<dbReference type="GO" id="GO:0004421">
    <property type="term" value="F:hydroxymethylglutaryl-CoA synthase activity"/>
    <property type="evidence" value="ECO:0000318"/>
    <property type="project" value="GO_Central"/>
</dbReference>
<dbReference type="GO" id="GO:0006084">
    <property type="term" value="P:acetyl-CoA metabolic process"/>
    <property type="evidence" value="ECO:0000318"/>
    <property type="project" value="GO_Central"/>
</dbReference>
<dbReference type="GO" id="GO:0017000">
    <property type="term" value="P:antibiotic biosynthetic process"/>
    <property type="evidence" value="ECO:0007669"/>
    <property type="project" value="UniProtKB-KW"/>
</dbReference>
<dbReference type="CDD" id="cd00827">
    <property type="entry name" value="init_cond_enzymes"/>
    <property type="match status" value="1"/>
</dbReference>
<dbReference type="Gene3D" id="3.40.47.10">
    <property type="match status" value="2"/>
</dbReference>
<dbReference type="InterPro" id="IPR013746">
    <property type="entry name" value="HMG_CoA_synt_C_dom"/>
</dbReference>
<dbReference type="InterPro" id="IPR013528">
    <property type="entry name" value="HMG_CoA_synth_N"/>
</dbReference>
<dbReference type="InterPro" id="IPR016039">
    <property type="entry name" value="Thiolase-like"/>
</dbReference>
<dbReference type="PANTHER" id="PTHR43323">
    <property type="entry name" value="3-HYDROXY-3-METHYLGLUTARYL COENZYME A SYNTHASE"/>
    <property type="match status" value="1"/>
</dbReference>
<dbReference type="PANTHER" id="PTHR43323:SF2">
    <property type="entry name" value="HYDROXYMETHYLGLUTARYL-COA SYNTHASE"/>
    <property type="match status" value="1"/>
</dbReference>
<dbReference type="Pfam" id="PF08540">
    <property type="entry name" value="HMG_CoA_synt_C"/>
    <property type="match status" value="1"/>
</dbReference>
<dbReference type="Pfam" id="PF01154">
    <property type="entry name" value="HMG_CoA_synt_N"/>
    <property type="match status" value="1"/>
</dbReference>
<dbReference type="SUPFAM" id="SSF53901">
    <property type="entry name" value="Thiolase-like"/>
    <property type="match status" value="2"/>
</dbReference>
<protein>
    <recommendedName>
        <fullName>Polyketide biosynthesis 3-hydroxy-3-methylglutaryl-ACP synthase PksG</fullName>
        <shortName>HMG synthase</shortName>
        <ecNumber>2.3.3.-</ecNumber>
    </recommendedName>
</protein>
<reference key="1">
    <citation type="journal article" date="1995" name="Microbiology">
        <title>Sequence around the 159 degree region of the Bacillus subtilis genome: the pksX locus spans 33.6 kb.</title>
        <authorList>
            <person name="Albertini A.M."/>
            <person name="Caramori T."/>
            <person name="Scoffone F."/>
            <person name="Scotti C."/>
            <person name="Galizzi A."/>
        </authorList>
    </citation>
    <scope>NUCLEOTIDE SEQUENCE [GENOMIC DNA]</scope>
    <source>
        <strain>168 / PB1424</strain>
    </source>
</reference>
<reference key="2">
    <citation type="journal article" date="1997" name="Nature">
        <title>The complete genome sequence of the Gram-positive bacterium Bacillus subtilis.</title>
        <authorList>
            <person name="Kunst F."/>
            <person name="Ogasawara N."/>
            <person name="Moszer I."/>
            <person name="Albertini A.M."/>
            <person name="Alloni G."/>
            <person name="Azevedo V."/>
            <person name="Bertero M.G."/>
            <person name="Bessieres P."/>
            <person name="Bolotin A."/>
            <person name="Borchert S."/>
            <person name="Borriss R."/>
            <person name="Boursier L."/>
            <person name="Brans A."/>
            <person name="Braun M."/>
            <person name="Brignell S.C."/>
            <person name="Bron S."/>
            <person name="Brouillet S."/>
            <person name="Bruschi C.V."/>
            <person name="Caldwell B."/>
            <person name="Capuano V."/>
            <person name="Carter N.M."/>
            <person name="Choi S.-K."/>
            <person name="Codani J.-J."/>
            <person name="Connerton I.F."/>
            <person name="Cummings N.J."/>
            <person name="Daniel R.A."/>
            <person name="Denizot F."/>
            <person name="Devine K.M."/>
            <person name="Duesterhoeft A."/>
            <person name="Ehrlich S.D."/>
            <person name="Emmerson P.T."/>
            <person name="Entian K.-D."/>
            <person name="Errington J."/>
            <person name="Fabret C."/>
            <person name="Ferrari E."/>
            <person name="Foulger D."/>
            <person name="Fritz C."/>
            <person name="Fujita M."/>
            <person name="Fujita Y."/>
            <person name="Fuma S."/>
            <person name="Galizzi A."/>
            <person name="Galleron N."/>
            <person name="Ghim S.-Y."/>
            <person name="Glaser P."/>
            <person name="Goffeau A."/>
            <person name="Golightly E.J."/>
            <person name="Grandi G."/>
            <person name="Guiseppi G."/>
            <person name="Guy B.J."/>
            <person name="Haga K."/>
            <person name="Haiech J."/>
            <person name="Harwood C.R."/>
            <person name="Henaut A."/>
            <person name="Hilbert H."/>
            <person name="Holsappel S."/>
            <person name="Hosono S."/>
            <person name="Hullo M.-F."/>
            <person name="Itaya M."/>
            <person name="Jones L.-M."/>
            <person name="Joris B."/>
            <person name="Karamata D."/>
            <person name="Kasahara Y."/>
            <person name="Klaerr-Blanchard M."/>
            <person name="Klein C."/>
            <person name="Kobayashi Y."/>
            <person name="Koetter P."/>
            <person name="Koningstein G."/>
            <person name="Krogh S."/>
            <person name="Kumano M."/>
            <person name="Kurita K."/>
            <person name="Lapidus A."/>
            <person name="Lardinois S."/>
            <person name="Lauber J."/>
            <person name="Lazarevic V."/>
            <person name="Lee S.-M."/>
            <person name="Levine A."/>
            <person name="Liu H."/>
            <person name="Masuda S."/>
            <person name="Mauel C."/>
            <person name="Medigue C."/>
            <person name="Medina N."/>
            <person name="Mellado R.P."/>
            <person name="Mizuno M."/>
            <person name="Moestl D."/>
            <person name="Nakai S."/>
            <person name="Noback M."/>
            <person name="Noone D."/>
            <person name="O'Reilly M."/>
            <person name="Ogawa K."/>
            <person name="Ogiwara A."/>
            <person name="Oudega B."/>
            <person name="Park S.-H."/>
            <person name="Parro V."/>
            <person name="Pohl T.M."/>
            <person name="Portetelle D."/>
            <person name="Porwollik S."/>
            <person name="Prescott A.M."/>
            <person name="Presecan E."/>
            <person name="Pujic P."/>
            <person name="Purnelle B."/>
            <person name="Rapoport G."/>
            <person name="Rey M."/>
            <person name="Reynolds S."/>
            <person name="Rieger M."/>
            <person name="Rivolta C."/>
            <person name="Rocha E."/>
            <person name="Roche B."/>
            <person name="Rose M."/>
            <person name="Sadaie Y."/>
            <person name="Sato T."/>
            <person name="Scanlan E."/>
            <person name="Schleich S."/>
            <person name="Schroeter R."/>
            <person name="Scoffone F."/>
            <person name="Sekiguchi J."/>
            <person name="Sekowska A."/>
            <person name="Seror S.J."/>
            <person name="Serror P."/>
            <person name="Shin B.-S."/>
            <person name="Soldo B."/>
            <person name="Sorokin A."/>
            <person name="Tacconi E."/>
            <person name="Takagi T."/>
            <person name="Takahashi H."/>
            <person name="Takemaru K."/>
            <person name="Takeuchi M."/>
            <person name="Tamakoshi A."/>
            <person name="Tanaka T."/>
            <person name="Terpstra P."/>
            <person name="Tognoni A."/>
            <person name="Tosato V."/>
            <person name="Uchiyama S."/>
            <person name="Vandenbol M."/>
            <person name="Vannier F."/>
            <person name="Vassarotti A."/>
            <person name="Viari A."/>
            <person name="Wambutt R."/>
            <person name="Wedler E."/>
            <person name="Wedler H."/>
            <person name="Weitzenegger T."/>
            <person name="Winters P."/>
            <person name="Wipat A."/>
            <person name="Yamamoto H."/>
            <person name="Yamane K."/>
            <person name="Yasumoto K."/>
            <person name="Yata K."/>
            <person name="Yoshida K."/>
            <person name="Yoshikawa H.-F."/>
            <person name="Zumstein E."/>
            <person name="Yoshikawa H."/>
            <person name="Danchin A."/>
        </authorList>
    </citation>
    <scope>NUCLEOTIDE SEQUENCE [LARGE SCALE GENOMIC DNA]</scope>
    <source>
        <strain>168</strain>
    </source>
</reference>
<reference key="3">
    <citation type="journal article" date="2009" name="Microbiology">
        <title>From a consortium sequence to a unified sequence: the Bacillus subtilis 168 reference genome a decade later.</title>
        <authorList>
            <person name="Barbe V."/>
            <person name="Cruveiller S."/>
            <person name="Kunst F."/>
            <person name="Lenoble P."/>
            <person name="Meurice G."/>
            <person name="Sekowska A."/>
            <person name="Vallenet D."/>
            <person name="Wang T."/>
            <person name="Moszer I."/>
            <person name="Medigue C."/>
            <person name="Danchin A."/>
        </authorList>
    </citation>
    <scope>SEQUENCE REVISION TO N-TERMINUS</scope>
</reference>
<reference key="4">
    <citation type="journal article" date="2006" name="Proc. Natl. Acad. Sci. U.S.A.">
        <title>Convergence of isoprene and polyketide biosynthetic machinery: isoprenyl-S-carrier proteins in the pksX pathway of Bacillus subtilis.</title>
        <authorList>
            <person name="Calderone C.T."/>
            <person name="Kowtoniuk W.E."/>
            <person name="Kelleher N.L."/>
            <person name="Walsh C.T."/>
            <person name="Dorrestein P.C."/>
        </authorList>
    </citation>
    <scope>FUNCTION</scope>
    <scope>CATALYTIC ACTIVITY</scope>
</reference>
<reference key="5">
    <citation type="journal article" date="2007" name="Proc. Natl. Acad. Sci. U.S.A.">
        <title>A singular enzymatic megacomplex from Bacillus subtilis.</title>
        <authorList>
            <person name="Straight P.D."/>
            <person name="Fischbach M.A."/>
            <person name="Walsh C.T."/>
            <person name="Rudner D.Z."/>
            <person name="Kolter R."/>
        </authorList>
    </citation>
    <scope>SUBCELLULAR LOCATION</scope>
    <source>
        <strain>168 / Marburg / ATCC 6051 / DSM 10 / JCM 1465 / NBRC 13719 / NCIMB 3610 / NRRL NRS-744 / VKM B-501</strain>
    </source>
</reference>
<reference key="6">
    <citation type="journal article" date="2007" name="Proc. Natl. Acad. Sci. U.S.A.">
        <title>The identification of bacillaene, the product of the PksX megacomplex in Bacillus subtilis.</title>
        <authorList>
            <person name="Butcher R.A."/>
            <person name="Schroeder F.C."/>
            <person name="Fischbach M.A."/>
            <person name="Straight P.D."/>
            <person name="Kolter R."/>
            <person name="Walsh C.T."/>
            <person name="Clardy J."/>
        </authorList>
    </citation>
    <scope>FUNCTION IN BACILLAENE BIOSYNTHESIS</scope>
    <source>
        <strain>168 / Marburg / ATCC 6051 / DSM 10 / JCM 1465 / NBRC 13719 / NCIMB 3610 / NRRL NRS-744 / VKM B-501</strain>
    </source>
</reference>
<name>PKSG_BACSU</name>
<organism>
    <name type="scientific">Bacillus subtilis (strain 168)</name>
    <dbReference type="NCBI Taxonomy" id="224308"/>
    <lineage>
        <taxon>Bacteria</taxon>
        <taxon>Bacillati</taxon>
        <taxon>Bacillota</taxon>
        <taxon>Bacilli</taxon>
        <taxon>Bacillales</taxon>
        <taxon>Bacillaceae</taxon>
        <taxon>Bacillus</taxon>
    </lineage>
</organism>
<gene>
    <name type="primary">pksG</name>
    <name type="ordered locus">BSU17150</name>
</gene>
<sequence length="420" mass="46780">MVSAGIEAMNVFGGTAYLDVMELAKYRHLDTARFENLLMKEKAVALPYEDPVTFGVNAAKPIIDALSEAEKDRIELLITCSESGIDFGKSLSTYIHEYLGLNRNCRLFEVKQACYSGTAGFQMAVNFILSQTSPGAKALVIASDISRFLIAEGGDALSEDWSYAEPSAGAGAVAVLVGENPEVFQIDPGANGYYGYEVMDTCRPIPDSEAGDSDLSLMSYLDCCEQTFLEYQKRVPGANYQDTFQYLAYHTPFGGMVKGAHRTMMRKVAKVKTSGIETDFLTRVKPGLNYCQRVGNIMGAALFLALASTIDQGRFDTPKRIGCFSYGSGCCSEFYSGITTPQGQERQRTFGIEKHLDRRYQLSMEEYELLFKGSGMVRFGTRNVKLDFEMIPGIMQSTQEKPRLFLEEISEFHRKYRWIS</sequence>